<proteinExistence type="inferred from homology"/>
<name>IDI_SALAR</name>
<reference key="1">
    <citation type="submission" date="2007-11" db="EMBL/GenBank/DDBJ databases">
        <authorList>
            <consortium name="The Salmonella enterica serovar Arizonae Genome Sequencing Project"/>
            <person name="McClelland M."/>
            <person name="Sanderson E.K."/>
            <person name="Porwollik S."/>
            <person name="Spieth J."/>
            <person name="Clifton W.S."/>
            <person name="Fulton R."/>
            <person name="Chunyan W."/>
            <person name="Wollam A."/>
            <person name="Shah N."/>
            <person name="Pepin K."/>
            <person name="Bhonagiri V."/>
            <person name="Nash W."/>
            <person name="Johnson M."/>
            <person name="Thiruvilangam P."/>
            <person name="Wilson R."/>
        </authorList>
    </citation>
    <scope>NUCLEOTIDE SEQUENCE [LARGE SCALE GENOMIC DNA]</scope>
    <source>
        <strain>ATCC BAA-731 / CDC346-86 / RSK2980</strain>
    </source>
</reference>
<gene>
    <name evidence="1" type="primary">idi</name>
    <name type="ordered locus">SARI_04611</name>
</gene>
<dbReference type="EC" id="5.3.3.2" evidence="1"/>
<dbReference type="EMBL" id="CP000880">
    <property type="protein sequence ID" value="ABX24383.1"/>
    <property type="molecule type" value="Genomic_DNA"/>
</dbReference>
<dbReference type="SMR" id="A9MRI5"/>
<dbReference type="STRING" id="41514.SARI_04611"/>
<dbReference type="KEGG" id="ses:SARI_04611"/>
<dbReference type="HOGENOM" id="CLU_060552_2_0_6"/>
<dbReference type="UniPathway" id="UPA00059">
    <property type="reaction ID" value="UER00104"/>
</dbReference>
<dbReference type="Proteomes" id="UP000002084">
    <property type="component" value="Chromosome"/>
</dbReference>
<dbReference type="GO" id="GO:0005737">
    <property type="term" value="C:cytoplasm"/>
    <property type="evidence" value="ECO:0007669"/>
    <property type="project" value="UniProtKB-SubCell"/>
</dbReference>
<dbReference type="GO" id="GO:0004452">
    <property type="term" value="F:isopentenyl-diphosphate delta-isomerase activity"/>
    <property type="evidence" value="ECO:0007669"/>
    <property type="project" value="UniProtKB-UniRule"/>
</dbReference>
<dbReference type="GO" id="GO:0046872">
    <property type="term" value="F:metal ion binding"/>
    <property type="evidence" value="ECO:0007669"/>
    <property type="project" value="UniProtKB-KW"/>
</dbReference>
<dbReference type="GO" id="GO:0050992">
    <property type="term" value="P:dimethylallyl diphosphate biosynthetic process"/>
    <property type="evidence" value="ECO:0007669"/>
    <property type="project" value="UniProtKB-UniRule"/>
</dbReference>
<dbReference type="GO" id="GO:0008299">
    <property type="term" value="P:isoprenoid biosynthetic process"/>
    <property type="evidence" value="ECO:0007669"/>
    <property type="project" value="UniProtKB-KW"/>
</dbReference>
<dbReference type="CDD" id="cd02885">
    <property type="entry name" value="NUDIX_IPP_Isomerase"/>
    <property type="match status" value="1"/>
</dbReference>
<dbReference type="FunFam" id="3.90.79.10:FF:000009">
    <property type="entry name" value="Isopentenyl-diphosphate Delta-isomerase"/>
    <property type="match status" value="1"/>
</dbReference>
<dbReference type="Gene3D" id="3.90.79.10">
    <property type="entry name" value="Nucleoside Triphosphate Pyrophosphohydrolase"/>
    <property type="match status" value="1"/>
</dbReference>
<dbReference type="HAMAP" id="MF_00202">
    <property type="entry name" value="Idi"/>
    <property type="match status" value="1"/>
</dbReference>
<dbReference type="InterPro" id="IPR056375">
    <property type="entry name" value="Idi_bact"/>
</dbReference>
<dbReference type="InterPro" id="IPR011876">
    <property type="entry name" value="IsopentenylPP_isomerase_typ1"/>
</dbReference>
<dbReference type="InterPro" id="IPR015797">
    <property type="entry name" value="NUDIX_hydrolase-like_dom_sf"/>
</dbReference>
<dbReference type="InterPro" id="IPR000086">
    <property type="entry name" value="NUDIX_hydrolase_dom"/>
</dbReference>
<dbReference type="NCBIfam" id="TIGR02150">
    <property type="entry name" value="IPP_isom_1"/>
    <property type="match status" value="1"/>
</dbReference>
<dbReference type="NCBIfam" id="NF002995">
    <property type="entry name" value="PRK03759.1"/>
    <property type="match status" value="1"/>
</dbReference>
<dbReference type="PANTHER" id="PTHR10885">
    <property type="entry name" value="ISOPENTENYL-DIPHOSPHATE DELTA-ISOMERASE"/>
    <property type="match status" value="1"/>
</dbReference>
<dbReference type="PANTHER" id="PTHR10885:SF0">
    <property type="entry name" value="ISOPENTENYL-DIPHOSPHATE DELTA-ISOMERASE"/>
    <property type="match status" value="1"/>
</dbReference>
<dbReference type="Pfam" id="PF00293">
    <property type="entry name" value="NUDIX"/>
    <property type="match status" value="1"/>
</dbReference>
<dbReference type="PIRSF" id="PIRSF018427">
    <property type="entry name" value="Isopntndiph_ism"/>
    <property type="match status" value="1"/>
</dbReference>
<dbReference type="SUPFAM" id="SSF55811">
    <property type="entry name" value="Nudix"/>
    <property type="match status" value="1"/>
</dbReference>
<dbReference type="PROSITE" id="PS51462">
    <property type="entry name" value="NUDIX"/>
    <property type="match status" value="1"/>
</dbReference>
<protein>
    <recommendedName>
        <fullName evidence="1">Isopentenyl-diphosphate Delta-isomerase</fullName>
        <shortName evidence="1">IPP isomerase</shortName>
        <ecNumber evidence="1">5.3.3.2</ecNumber>
    </recommendedName>
    <alternativeName>
        <fullName evidence="1">IPP:DMAPP isomerase</fullName>
    </alternativeName>
    <alternativeName>
        <fullName evidence="1">Isopentenyl pyrophosphate isomerase</fullName>
    </alternativeName>
</protein>
<sequence>MTEEHVVLLDEQDKPSGTLEKYAAHTLNTPLHLAFSCWLFNEDGQLLVTRRSLSKKAWPGVWTNSVCGHPQQGEAIEEAIIRRCRFELGVEITDLTPIYPHFSYRAIDPNGIVENEVCPVFAARATSVLQVNNEEVMDCQWSVLEDVLRGISATPWAFSPWMVMQASDDNARELLSEFANGN</sequence>
<comment type="function">
    <text evidence="1">Catalyzes the 1,3-allylic rearrangement of the homoallylic substrate isopentenyl (IPP) to its highly electrophilic allylic isomer, dimethylallyl diphosphate (DMAPP).</text>
</comment>
<comment type="catalytic activity">
    <reaction evidence="1">
        <text>isopentenyl diphosphate = dimethylallyl diphosphate</text>
        <dbReference type="Rhea" id="RHEA:23284"/>
        <dbReference type="ChEBI" id="CHEBI:57623"/>
        <dbReference type="ChEBI" id="CHEBI:128769"/>
        <dbReference type="EC" id="5.3.3.2"/>
    </reaction>
</comment>
<comment type="cofactor">
    <cofactor evidence="1">
        <name>Mg(2+)</name>
        <dbReference type="ChEBI" id="CHEBI:18420"/>
    </cofactor>
    <text evidence="1">Binds 1 Mg(2+) ion per subunit. The magnesium ion binds only when substrate is bound.</text>
</comment>
<comment type="cofactor">
    <cofactor evidence="1">
        <name>Mn(2+)</name>
        <dbReference type="ChEBI" id="CHEBI:29035"/>
    </cofactor>
    <text evidence="1">Binds 1 Mn(2+) ion per subunit.</text>
</comment>
<comment type="pathway">
    <text evidence="1">Isoprenoid biosynthesis; dimethylallyl diphosphate biosynthesis; dimethylallyl diphosphate from isopentenyl diphosphate: step 1/1.</text>
</comment>
<comment type="subunit">
    <text evidence="1">Homodimer.</text>
</comment>
<comment type="subcellular location">
    <subcellularLocation>
        <location evidence="1">Cytoplasm</location>
    </subcellularLocation>
</comment>
<comment type="similarity">
    <text evidence="1">Belongs to the IPP isomerase type 1 family.</text>
</comment>
<feature type="chain" id="PRO_1000077743" description="Isopentenyl-diphosphate Delta-isomerase">
    <location>
        <begin position="1"/>
        <end position="182"/>
    </location>
</feature>
<feature type="domain" description="Nudix hydrolase">
    <location>
        <begin position="30"/>
        <end position="164"/>
    </location>
</feature>
<feature type="active site" evidence="1">
    <location>
        <position position="67"/>
    </location>
</feature>
<feature type="active site" evidence="1">
    <location>
        <position position="116"/>
    </location>
</feature>
<feature type="binding site" evidence="1">
    <location>
        <position position="25"/>
    </location>
    <ligand>
        <name>Mn(2+)</name>
        <dbReference type="ChEBI" id="CHEBI:29035"/>
    </ligand>
</feature>
<feature type="binding site" evidence="1">
    <location>
        <position position="32"/>
    </location>
    <ligand>
        <name>Mn(2+)</name>
        <dbReference type="ChEBI" id="CHEBI:29035"/>
    </ligand>
</feature>
<feature type="binding site" evidence="1">
    <location>
        <position position="69"/>
    </location>
    <ligand>
        <name>Mn(2+)</name>
        <dbReference type="ChEBI" id="CHEBI:29035"/>
    </ligand>
</feature>
<feature type="binding site" evidence="1">
    <location>
        <position position="87"/>
    </location>
    <ligand>
        <name>Mg(2+)</name>
        <dbReference type="ChEBI" id="CHEBI:18420"/>
    </ligand>
</feature>
<feature type="binding site" evidence="1">
    <location>
        <position position="114"/>
    </location>
    <ligand>
        <name>Mn(2+)</name>
        <dbReference type="ChEBI" id="CHEBI:29035"/>
    </ligand>
</feature>
<feature type="binding site" evidence="1">
    <location>
        <position position="116"/>
    </location>
    <ligand>
        <name>Mn(2+)</name>
        <dbReference type="ChEBI" id="CHEBI:29035"/>
    </ligand>
</feature>
<organism>
    <name type="scientific">Salmonella arizonae (strain ATCC BAA-731 / CDC346-86 / RSK2980)</name>
    <dbReference type="NCBI Taxonomy" id="41514"/>
    <lineage>
        <taxon>Bacteria</taxon>
        <taxon>Pseudomonadati</taxon>
        <taxon>Pseudomonadota</taxon>
        <taxon>Gammaproteobacteria</taxon>
        <taxon>Enterobacterales</taxon>
        <taxon>Enterobacteriaceae</taxon>
        <taxon>Salmonella</taxon>
    </lineage>
</organism>
<keyword id="KW-0963">Cytoplasm</keyword>
<keyword id="KW-0413">Isomerase</keyword>
<keyword id="KW-0414">Isoprene biosynthesis</keyword>
<keyword id="KW-0460">Magnesium</keyword>
<keyword id="KW-0464">Manganese</keyword>
<keyword id="KW-0479">Metal-binding</keyword>
<keyword id="KW-1185">Reference proteome</keyword>
<evidence type="ECO:0000255" key="1">
    <source>
        <dbReference type="HAMAP-Rule" id="MF_00202"/>
    </source>
</evidence>
<accession>A9MRI5</accession>